<accession>Q09797</accession>
<gene>
    <name type="ORF">SPAC22G7.03</name>
</gene>
<proteinExistence type="predicted"/>
<organism>
    <name type="scientific">Schizosaccharomyces pombe (strain 972 / ATCC 24843)</name>
    <name type="common">Fission yeast</name>
    <dbReference type="NCBI Taxonomy" id="284812"/>
    <lineage>
        <taxon>Eukaryota</taxon>
        <taxon>Fungi</taxon>
        <taxon>Dikarya</taxon>
        <taxon>Ascomycota</taxon>
        <taxon>Taphrinomycotina</taxon>
        <taxon>Schizosaccharomycetes</taxon>
        <taxon>Schizosaccharomycetales</taxon>
        <taxon>Schizosaccharomycetaceae</taxon>
        <taxon>Schizosaccharomyces</taxon>
    </lineage>
</organism>
<sequence length="236" mass="26869">MQQLIKEHFGNGGKVRSTSIEYPIFVHSGSISAMLLTLVNALECNDVDEGVLVYPTGSTNPMENILRMENPFDGFLAKEAYSIHFQSVLERIQLIPCSHVDDLEKIVEVRLKHAKLILGIADISKLLKIRGCLNGRYLSRYLMLCLQNSKILIVCETGGLQERIPIIEDISINEDTQRTVSLETIYATWIPTFWESKRKSHEKDEGRLVDRRHKVLVDWLANTCFRGMSLKDHSAL</sequence>
<reference key="1">
    <citation type="journal article" date="2002" name="Nature">
        <title>The genome sequence of Schizosaccharomyces pombe.</title>
        <authorList>
            <person name="Wood V."/>
            <person name="Gwilliam R."/>
            <person name="Rajandream M.A."/>
            <person name="Lyne M.H."/>
            <person name="Lyne R."/>
            <person name="Stewart A."/>
            <person name="Sgouros J.G."/>
            <person name="Peat N."/>
            <person name="Hayles J."/>
            <person name="Baker S.G."/>
            <person name="Basham D."/>
            <person name="Bowman S."/>
            <person name="Brooks K."/>
            <person name="Brown D."/>
            <person name="Brown S."/>
            <person name="Chillingworth T."/>
            <person name="Churcher C.M."/>
            <person name="Collins M."/>
            <person name="Connor R."/>
            <person name="Cronin A."/>
            <person name="Davis P."/>
            <person name="Feltwell T."/>
            <person name="Fraser A."/>
            <person name="Gentles S."/>
            <person name="Goble A."/>
            <person name="Hamlin N."/>
            <person name="Harris D.E."/>
            <person name="Hidalgo J."/>
            <person name="Hodgson G."/>
            <person name="Holroyd S."/>
            <person name="Hornsby T."/>
            <person name="Howarth S."/>
            <person name="Huckle E.J."/>
            <person name="Hunt S."/>
            <person name="Jagels K."/>
            <person name="James K.D."/>
            <person name="Jones L."/>
            <person name="Jones M."/>
            <person name="Leather S."/>
            <person name="McDonald S."/>
            <person name="McLean J."/>
            <person name="Mooney P."/>
            <person name="Moule S."/>
            <person name="Mungall K.L."/>
            <person name="Murphy L.D."/>
            <person name="Niblett D."/>
            <person name="Odell C."/>
            <person name="Oliver K."/>
            <person name="O'Neil S."/>
            <person name="Pearson D."/>
            <person name="Quail M.A."/>
            <person name="Rabbinowitsch E."/>
            <person name="Rutherford K.M."/>
            <person name="Rutter S."/>
            <person name="Saunders D."/>
            <person name="Seeger K."/>
            <person name="Sharp S."/>
            <person name="Skelton J."/>
            <person name="Simmonds M.N."/>
            <person name="Squares R."/>
            <person name="Squares S."/>
            <person name="Stevens K."/>
            <person name="Taylor K."/>
            <person name="Taylor R.G."/>
            <person name="Tivey A."/>
            <person name="Walsh S.V."/>
            <person name="Warren T."/>
            <person name="Whitehead S."/>
            <person name="Woodward J.R."/>
            <person name="Volckaert G."/>
            <person name="Aert R."/>
            <person name="Robben J."/>
            <person name="Grymonprez B."/>
            <person name="Weltjens I."/>
            <person name="Vanstreels E."/>
            <person name="Rieger M."/>
            <person name="Schaefer M."/>
            <person name="Mueller-Auer S."/>
            <person name="Gabel C."/>
            <person name="Fuchs M."/>
            <person name="Duesterhoeft A."/>
            <person name="Fritzc C."/>
            <person name="Holzer E."/>
            <person name="Moestl D."/>
            <person name="Hilbert H."/>
            <person name="Borzym K."/>
            <person name="Langer I."/>
            <person name="Beck A."/>
            <person name="Lehrach H."/>
            <person name="Reinhardt R."/>
            <person name="Pohl T.M."/>
            <person name="Eger P."/>
            <person name="Zimmermann W."/>
            <person name="Wedler H."/>
            <person name="Wambutt R."/>
            <person name="Purnelle B."/>
            <person name="Goffeau A."/>
            <person name="Cadieu E."/>
            <person name="Dreano S."/>
            <person name="Gloux S."/>
            <person name="Lelaure V."/>
            <person name="Mottier S."/>
            <person name="Galibert F."/>
            <person name="Aves S.J."/>
            <person name="Xiang Z."/>
            <person name="Hunt C."/>
            <person name="Moore K."/>
            <person name="Hurst S.M."/>
            <person name="Lucas M."/>
            <person name="Rochet M."/>
            <person name="Gaillardin C."/>
            <person name="Tallada V.A."/>
            <person name="Garzon A."/>
            <person name="Thode G."/>
            <person name="Daga R.R."/>
            <person name="Cruzado L."/>
            <person name="Jimenez J."/>
            <person name="Sanchez M."/>
            <person name="del Rey F."/>
            <person name="Benito J."/>
            <person name="Dominguez A."/>
            <person name="Revuelta J.L."/>
            <person name="Moreno S."/>
            <person name="Armstrong J."/>
            <person name="Forsburg S.L."/>
            <person name="Cerutti L."/>
            <person name="Lowe T."/>
            <person name="McCombie W.R."/>
            <person name="Paulsen I."/>
            <person name="Potashkin J."/>
            <person name="Shpakovski G.V."/>
            <person name="Ussery D."/>
            <person name="Barrell B.G."/>
            <person name="Nurse P."/>
        </authorList>
    </citation>
    <scope>NUCLEOTIDE SEQUENCE [LARGE SCALE GENOMIC DNA]</scope>
    <source>
        <strain>972 / ATCC 24843</strain>
    </source>
</reference>
<keyword id="KW-1185">Reference proteome</keyword>
<dbReference type="EMBL" id="CU329670">
    <property type="protein sequence ID" value="CAA91127.1"/>
    <property type="molecule type" value="Genomic_DNA"/>
</dbReference>
<dbReference type="PIR" id="T11613">
    <property type="entry name" value="T11613"/>
</dbReference>
<dbReference type="RefSeq" id="NP_593052.1">
    <property type="nucleotide sequence ID" value="NM_001018450.2"/>
</dbReference>
<dbReference type="BioGRID" id="278179">
    <property type="interactions" value="14"/>
</dbReference>
<dbReference type="STRING" id="284812.Q09797"/>
<dbReference type="PaxDb" id="4896-SPAC22G7.03.1"/>
<dbReference type="EnsemblFungi" id="SPAC22G7.03.1">
    <property type="protein sequence ID" value="SPAC22G7.03.1:pep"/>
    <property type="gene ID" value="SPAC22G7.03"/>
</dbReference>
<dbReference type="KEGG" id="spo:2541683"/>
<dbReference type="PomBase" id="SPAC22G7.03"/>
<dbReference type="VEuPathDB" id="FungiDB:SPAC22G7.03"/>
<dbReference type="HOGENOM" id="CLU_1171211_0_0_1"/>
<dbReference type="InParanoid" id="Q09797"/>
<dbReference type="OMA" id="VYSLWIP"/>
<dbReference type="PRO" id="PR:Q09797"/>
<dbReference type="Proteomes" id="UP000002485">
    <property type="component" value="Chromosome I"/>
</dbReference>
<dbReference type="GO" id="GO:0005829">
    <property type="term" value="C:cytosol"/>
    <property type="evidence" value="ECO:0007005"/>
    <property type="project" value="PomBase"/>
</dbReference>
<dbReference type="GO" id="GO:0005634">
    <property type="term" value="C:nucleus"/>
    <property type="evidence" value="ECO:0007005"/>
    <property type="project" value="PomBase"/>
</dbReference>
<name>YAA3_SCHPO</name>
<feature type="chain" id="PRO_0000116405" description="Uncharacterized protein C22G7.03">
    <location>
        <begin position="1"/>
        <end position="236"/>
    </location>
</feature>
<protein>
    <recommendedName>
        <fullName>Uncharacterized protein C22G7.03</fullName>
    </recommendedName>
</protein>